<keyword id="KW-0050">Antiport</keyword>
<keyword id="KW-1003">Cell membrane</keyword>
<keyword id="KW-0406">Ion transport</keyword>
<keyword id="KW-0472">Membrane</keyword>
<keyword id="KW-0812">Transmembrane</keyword>
<keyword id="KW-1133">Transmembrane helix</keyword>
<keyword id="KW-0813">Transport</keyword>
<sequence>MSLVYLLIAILVIMAMILLMSKRRALAKYAGYIALVAPVISSIYFLIQIPSVAKLQYLSTSIPWIKTLDINLDLRLDGLSLMFSLIISLIGIAVFFYATQYLSSRKDNLPRFYFYLTLFMFSMIGIVLSDNTILMYIFWELTSVSSFLLISYWYNNGDSQFGAIQSFMITVFGGLALLVGFIMLYIMTGTNNITDILGQADHIKNHGLFIPMIFMFLLGAFTKSAQFPFHIWLPRAMAAPTPVSAYLHSATMVKAGIFLLLRFTPLLGLSNMYIYIVTFVGLITMLFGSITALKQWDLKGILAYSTISQLGMIMAMVGIGGGYAQHQQDAIASIYVFVLFGALFHLMNHAIFKCALFMGVGILDHEAGSRDIRILSGMRQLFPKMNLVMTIAALSMAGVPFLNGFLSKEMFLDALTQTGQLSQFSLISMIAIVFVGVIASIFTFTYALYMVKEVFWTKYDSKVFTKKNIHEPWLFSLPSLILMVLVPVIFFVPNIFGKGIIVPALRGVSGGNHQIDPLAPHVSQWHGFNIPLLLTIIIILLGSVLAIKVDWKKVFTGKIRQISVSKGYEMVYRHFEKFATKRFKRVMQDRLNQYIIMTLGIFMIIIGYGYIRIGLPKVHQLHVSEFGALEIILAIVTVTIGISLIFIRQRLTMVILNGVIGFVVTLFFIAMKAPDLALTQLVVETITTILFIVSFSRLPNVPRSNANKKREIIKISVSLLMALIVVSLIFITQQTDGLSSISDFYLKADKLTGGKNIVNAILGDFRALDTLFEGLVLIITGLGIYTLLNYQDRRGQDERE</sequence>
<feature type="chain" id="PRO_0000372293" description="Putative antiporter subunit mnhA2">
    <location>
        <begin position="1"/>
        <end position="800"/>
    </location>
</feature>
<feature type="transmembrane region" description="Helical" evidence="2">
    <location>
        <begin position="1"/>
        <end position="21"/>
    </location>
</feature>
<feature type="transmembrane region" description="Helical" evidence="2">
    <location>
        <begin position="33"/>
        <end position="53"/>
    </location>
</feature>
<feature type="transmembrane region" description="Helical" evidence="2">
    <location>
        <begin position="78"/>
        <end position="98"/>
    </location>
</feature>
<feature type="transmembrane region" description="Helical" evidence="2">
    <location>
        <begin position="118"/>
        <end position="138"/>
    </location>
</feature>
<feature type="transmembrane region" description="Helical" evidence="2">
    <location>
        <begin position="167"/>
        <end position="187"/>
    </location>
</feature>
<feature type="transmembrane region" description="Helical" evidence="2">
    <location>
        <begin position="207"/>
        <end position="227"/>
    </location>
</feature>
<feature type="transmembrane region" description="Helical" evidence="2">
    <location>
        <begin position="241"/>
        <end position="261"/>
    </location>
</feature>
<feature type="transmembrane region" description="Helical" evidence="2">
    <location>
        <begin position="273"/>
        <end position="293"/>
    </location>
</feature>
<feature type="transmembrane region" description="Helical" evidence="2">
    <location>
        <begin position="300"/>
        <end position="320"/>
    </location>
</feature>
<feature type="transmembrane region" description="Helical" evidence="2">
    <location>
        <begin position="331"/>
        <end position="351"/>
    </location>
</feature>
<feature type="transmembrane region" description="Helical" evidence="2">
    <location>
        <begin position="387"/>
        <end position="407"/>
    </location>
</feature>
<feature type="transmembrane region" description="Helical" evidence="2">
    <location>
        <begin position="424"/>
        <end position="444"/>
    </location>
</feature>
<feature type="transmembrane region" description="Helical" evidence="2">
    <location>
        <begin position="472"/>
        <end position="492"/>
    </location>
</feature>
<feature type="transmembrane region" description="Helical" evidence="2">
    <location>
        <begin position="527"/>
        <end position="547"/>
    </location>
</feature>
<feature type="transmembrane region" description="Helical" evidence="2">
    <location>
        <begin position="595"/>
        <end position="615"/>
    </location>
</feature>
<feature type="transmembrane region" description="Helical" evidence="2">
    <location>
        <begin position="627"/>
        <end position="647"/>
    </location>
</feature>
<feature type="transmembrane region" description="Helical" evidence="2">
    <location>
        <begin position="651"/>
        <end position="671"/>
    </location>
</feature>
<feature type="transmembrane region" description="Helical" evidence="2">
    <location>
        <begin position="676"/>
        <end position="696"/>
    </location>
</feature>
<feature type="transmembrane region" description="Helical" evidence="2">
    <location>
        <begin position="712"/>
        <end position="732"/>
    </location>
</feature>
<feature type="transmembrane region" description="Helical" evidence="2">
    <location>
        <begin position="768"/>
        <end position="788"/>
    </location>
</feature>
<accession>Q99VZ2</accession>
<organism>
    <name type="scientific">Staphylococcus aureus (strain N315)</name>
    <dbReference type="NCBI Taxonomy" id="158879"/>
    <lineage>
        <taxon>Bacteria</taxon>
        <taxon>Bacillati</taxon>
        <taxon>Bacillota</taxon>
        <taxon>Bacilli</taxon>
        <taxon>Bacillales</taxon>
        <taxon>Staphylococcaceae</taxon>
        <taxon>Staphylococcus</taxon>
    </lineage>
</organism>
<reference key="1">
    <citation type="journal article" date="2001" name="Lancet">
        <title>Whole genome sequencing of meticillin-resistant Staphylococcus aureus.</title>
        <authorList>
            <person name="Kuroda M."/>
            <person name="Ohta T."/>
            <person name="Uchiyama I."/>
            <person name="Baba T."/>
            <person name="Yuzawa H."/>
            <person name="Kobayashi I."/>
            <person name="Cui L."/>
            <person name="Oguchi A."/>
            <person name="Aoki K."/>
            <person name="Nagai Y."/>
            <person name="Lian J.-Q."/>
            <person name="Ito T."/>
            <person name="Kanamori M."/>
            <person name="Matsumaru H."/>
            <person name="Maruyama A."/>
            <person name="Murakami H."/>
            <person name="Hosoyama A."/>
            <person name="Mizutani-Ui Y."/>
            <person name="Takahashi N.K."/>
            <person name="Sawano T."/>
            <person name="Inoue R."/>
            <person name="Kaito C."/>
            <person name="Sekimizu K."/>
            <person name="Hirakawa H."/>
            <person name="Kuhara S."/>
            <person name="Goto S."/>
            <person name="Yabuzaki J."/>
            <person name="Kanehisa M."/>
            <person name="Yamashita A."/>
            <person name="Oshima K."/>
            <person name="Furuya K."/>
            <person name="Yoshino C."/>
            <person name="Shiba T."/>
            <person name="Hattori M."/>
            <person name="Ogasawara N."/>
            <person name="Hayashi H."/>
            <person name="Hiramatsu K."/>
        </authorList>
    </citation>
    <scope>NUCLEOTIDE SEQUENCE [LARGE SCALE GENOMIC DNA]</scope>
    <source>
        <strain>N315</strain>
    </source>
</reference>
<proteinExistence type="inferred from homology"/>
<protein>
    <recommendedName>
        <fullName>Putative antiporter subunit mnhA2</fullName>
    </recommendedName>
    <alternativeName>
        <fullName>Mrp complex subunit A2</fullName>
    </alternativeName>
    <alternativeName>
        <fullName>Putative NADH-ubiquinone oxidoreductase subunit mnhA2</fullName>
    </alternativeName>
</protein>
<evidence type="ECO:0000250" key="1"/>
<evidence type="ECO:0000255" key="2"/>
<evidence type="ECO:0000305" key="3"/>
<gene>
    <name type="primary">mnhA2</name>
    <name type="synonym">mrpA2</name>
    <name type="ordered locus">SA0578</name>
</gene>
<comment type="subunit">
    <text evidence="1">May form a heterooligomeric complex that consists of seven subunits: mnhA2, mnhB2, mnhC2, mnhD2, mnhE2, mnhF2 and mnhG2.</text>
</comment>
<comment type="subcellular location">
    <subcellularLocation>
        <location evidence="3">Cell membrane</location>
        <topology evidence="3">Multi-pass membrane protein</topology>
    </subcellularLocation>
</comment>
<comment type="similarity">
    <text evidence="3">Belongs to the CPA3 antiporters (TC 2.A.63) subunit A family.</text>
</comment>
<name>MNHA2_STAAN</name>
<dbReference type="EMBL" id="BA000018">
    <property type="protein sequence ID" value="BAB41810.1"/>
    <property type="molecule type" value="Genomic_DNA"/>
</dbReference>
<dbReference type="PIR" id="G89831">
    <property type="entry name" value="G89831"/>
</dbReference>
<dbReference type="RefSeq" id="WP_000060771.1">
    <property type="nucleotide sequence ID" value="NC_002745.2"/>
</dbReference>
<dbReference type="SMR" id="Q99VZ2"/>
<dbReference type="EnsemblBacteria" id="BAB41810">
    <property type="protein sequence ID" value="BAB41810"/>
    <property type="gene ID" value="BAB41810"/>
</dbReference>
<dbReference type="KEGG" id="sau:SA0578"/>
<dbReference type="HOGENOM" id="CLU_007100_2_1_9"/>
<dbReference type="GO" id="GO:0005886">
    <property type="term" value="C:plasma membrane"/>
    <property type="evidence" value="ECO:0007669"/>
    <property type="project" value="UniProtKB-SubCell"/>
</dbReference>
<dbReference type="GO" id="GO:0015297">
    <property type="term" value="F:antiporter activity"/>
    <property type="evidence" value="ECO:0007669"/>
    <property type="project" value="UniProtKB-KW"/>
</dbReference>
<dbReference type="GO" id="GO:0006811">
    <property type="term" value="P:monoatomic ion transport"/>
    <property type="evidence" value="ECO:0007669"/>
    <property type="project" value="UniProtKB-KW"/>
</dbReference>
<dbReference type="InterPro" id="IPR050616">
    <property type="entry name" value="CPA3_Na-H_Antiporter_A"/>
</dbReference>
<dbReference type="InterPro" id="IPR025383">
    <property type="entry name" value="MrpA_C/MbhD"/>
</dbReference>
<dbReference type="InterPro" id="IPR046806">
    <property type="entry name" value="MrpA_C/MbhE"/>
</dbReference>
<dbReference type="InterPro" id="IPR001750">
    <property type="entry name" value="ND/Mrp_TM"/>
</dbReference>
<dbReference type="InterPro" id="IPR001516">
    <property type="entry name" value="Proton_antipo_N"/>
</dbReference>
<dbReference type="NCBIfam" id="NF009286">
    <property type="entry name" value="PRK12646.1"/>
    <property type="match status" value="1"/>
</dbReference>
<dbReference type="PANTHER" id="PTHR43373">
    <property type="entry name" value="NA(+)/H(+) ANTIPORTER SUBUNIT"/>
    <property type="match status" value="1"/>
</dbReference>
<dbReference type="PANTHER" id="PTHR43373:SF1">
    <property type="entry name" value="NA(+)_H(+) ANTIPORTER SUBUNIT A"/>
    <property type="match status" value="1"/>
</dbReference>
<dbReference type="Pfam" id="PF13244">
    <property type="entry name" value="MbhD"/>
    <property type="match status" value="1"/>
</dbReference>
<dbReference type="Pfam" id="PF20501">
    <property type="entry name" value="MbhE"/>
    <property type="match status" value="1"/>
</dbReference>
<dbReference type="Pfam" id="PF00361">
    <property type="entry name" value="Proton_antipo_M"/>
    <property type="match status" value="1"/>
</dbReference>
<dbReference type="Pfam" id="PF00662">
    <property type="entry name" value="Proton_antipo_N"/>
    <property type="match status" value="1"/>
</dbReference>
<dbReference type="PRINTS" id="PR01434">
    <property type="entry name" value="NADHDHGNASE5"/>
</dbReference>